<sequence>MPRFCYSRSGALLLALLLQTSIDVWSWCLESSQCQDLTTESNLLACIRACKLDLSLETPVFPGNGDEQPLTENPRKYVMGHFRWDRFGPRNSSSAGSAAQRRAEEEAVWGDGSPEPSPREGKRSYSMEHFRWGKPVGKKRRPVKVYPNVAENESAEAFPLEFKRELEGERPLGLEQVLESDAEKDDGPYRVEHFRWSNPPKDKRYGGFMTSEKSQTPLVTLFKNAIIKNAHKKGQ</sequence>
<reference key="1">
    <citation type="journal article" date="1983" name="FEBS Lett.">
        <title>Isolation and characterization of the mouse corticotropin-beta-lipotropin precursor gene and a related pseudogene.</title>
        <authorList>
            <person name="Notake M."/>
            <person name="Tobimatsu T."/>
            <person name="Watanabe Y."/>
            <person name="Takahashi H."/>
            <person name="Mishina M."/>
            <person name="Numa S."/>
        </authorList>
    </citation>
    <scope>NUCLEOTIDE SEQUENCE [GENOMIC DNA]</scope>
</reference>
<reference key="2">
    <citation type="journal article" date="1983" name="J. Biol. Chem.">
        <title>The mouse genome contains two nonallelic pro-opiomelanocortin genes.</title>
        <authorList>
            <person name="Uhler M."/>
            <person name="Herbert E."/>
            <person name="D'Eustachio P."/>
            <person name="Ruddle F.D."/>
        </authorList>
    </citation>
    <scope>NUCLEOTIDE SEQUENCE [GENOMIC DNA]</scope>
</reference>
<reference key="3">
    <citation type="journal article" date="2005" name="Science">
        <title>The transcriptional landscape of the mammalian genome.</title>
        <authorList>
            <person name="Carninci P."/>
            <person name="Kasukawa T."/>
            <person name="Katayama S."/>
            <person name="Gough J."/>
            <person name="Frith M.C."/>
            <person name="Maeda N."/>
            <person name="Oyama R."/>
            <person name="Ravasi T."/>
            <person name="Lenhard B."/>
            <person name="Wells C."/>
            <person name="Kodzius R."/>
            <person name="Shimokawa K."/>
            <person name="Bajic V.B."/>
            <person name="Brenner S.E."/>
            <person name="Batalov S."/>
            <person name="Forrest A.R."/>
            <person name="Zavolan M."/>
            <person name="Davis M.J."/>
            <person name="Wilming L.G."/>
            <person name="Aidinis V."/>
            <person name="Allen J.E."/>
            <person name="Ambesi-Impiombato A."/>
            <person name="Apweiler R."/>
            <person name="Aturaliya R.N."/>
            <person name="Bailey T.L."/>
            <person name="Bansal M."/>
            <person name="Baxter L."/>
            <person name="Beisel K.W."/>
            <person name="Bersano T."/>
            <person name="Bono H."/>
            <person name="Chalk A.M."/>
            <person name="Chiu K.P."/>
            <person name="Choudhary V."/>
            <person name="Christoffels A."/>
            <person name="Clutterbuck D.R."/>
            <person name="Crowe M.L."/>
            <person name="Dalla E."/>
            <person name="Dalrymple B.P."/>
            <person name="de Bono B."/>
            <person name="Della Gatta G."/>
            <person name="di Bernardo D."/>
            <person name="Down T."/>
            <person name="Engstrom P."/>
            <person name="Fagiolini M."/>
            <person name="Faulkner G."/>
            <person name="Fletcher C.F."/>
            <person name="Fukushima T."/>
            <person name="Furuno M."/>
            <person name="Futaki S."/>
            <person name="Gariboldi M."/>
            <person name="Georgii-Hemming P."/>
            <person name="Gingeras T.R."/>
            <person name="Gojobori T."/>
            <person name="Green R.E."/>
            <person name="Gustincich S."/>
            <person name="Harbers M."/>
            <person name="Hayashi Y."/>
            <person name="Hensch T.K."/>
            <person name="Hirokawa N."/>
            <person name="Hill D."/>
            <person name="Huminiecki L."/>
            <person name="Iacono M."/>
            <person name="Ikeo K."/>
            <person name="Iwama A."/>
            <person name="Ishikawa T."/>
            <person name="Jakt M."/>
            <person name="Kanapin A."/>
            <person name="Katoh M."/>
            <person name="Kawasawa Y."/>
            <person name="Kelso J."/>
            <person name="Kitamura H."/>
            <person name="Kitano H."/>
            <person name="Kollias G."/>
            <person name="Krishnan S.P."/>
            <person name="Kruger A."/>
            <person name="Kummerfeld S.K."/>
            <person name="Kurochkin I.V."/>
            <person name="Lareau L.F."/>
            <person name="Lazarevic D."/>
            <person name="Lipovich L."/>
            <person name="Liu J."/>
            <person name="Liuni S."/>
            <person name="McWilliam S."/>
            <person name="Madan Babu M."/>
            <person name="Madera M."/>
            <person name="Marchionni L."/>
            <person name="Matsuda H."/>
            <person name="Matsuzawa S."/>
            <person name="Miki H."/>
            <person name="Mignone F."/>
            <person name="Miyake S."/>
            <person name="Morris K."/>
            <person name="Mottagui-Tabar S."/>
            <person name="Mulder N."/>
            <person name="Nakano N."/>
            <person name="Nakauchi H."/>
            <person name="Ng P."/>
            <person name="Nilsson R."/>
            <person name="Nishiguchi S."/>
            <person name="Nishikawa S."/>
            <person name="Nori F."/>
            <person name="Ohara O."/>
            <person name="Okazaki Y."/>
            <person name="Orlando V."/>
            <person name="Pang K.C."/>
            <person name="Pavan W.J."/>
            <person name="Pavesi G."/>
            <person name="Pesole G."/>
            <person name="Petrovsky N."/>
            <person name="Piazza S."/>
            <person name="Reed J."/>
            <person name="Reid J.F."/>
            <person name="Ring B.Z."/>
            <person name="Ringwald M."/>
            <person name="Rost B."/>
            <person name="Ruan Y."/>
            <person name="Salzberg S.L."/>
            <person name="Sandelin A."/>
            <person name="Schneider C."/>
            <person name="Schoenbach C."/>
            <person name="Sekiguchi K."/>
            <person name="Semple C.A."/>
            <person name="Seno S."/>
            <person name="Sessa L."/>
            <person name="Sheng Y."/>
            <person name="Shibata Y."/>
            <person name="Shimada H."/>
            <person name="Shimada K."/>
            <person name="Silva D."/>
            <person name="Sinclair B."/>
            <person name="Sperling S."/>
            <person name="Stupka E."/>
            <person name="Sugiura K."/>
            <person name="Sultana R."/>
            <person name="Takenaka Y."/>
            <person name="Taki K."/>
            <person name="Tammoja K."/>
            <person name="Tan S.L."/>
            <person name="Tang S."/>
            <person name="Taylor M.S."/>
            <person name="Tegner J."/>
            <person name="Teichmann S.A."/>
            <person name="Ueda H.R."/>
            <person name="van Nimwegen E."/>
            <person name="Verardo R."/>
            <person name="Wei C.L."/>
            <person name="Yagi K."/>
            <person name="Yamanishi H."/>
            <person name="Zabarovsky E."/>
            <person name="Zhu S."/>
            <person name="Zimmer A."/>
            <person name="Hide W."/>
            <person name="Bult C."/>
            <person name="Grimmond S.M."/>
            <person name="Teasdale R.D."/>
            <person name="Liu E.T."/>
            <person name="Brusic V."/>
            <person name="Quackenbush J."/>
            <person name="Wahlestedt C."/>
            <person name="Mattick J.S."/>
            <person name="Hume D.A."/>
            <person name="Kai C."/>
            <person name="Sasaki D."/>
            <person name="Tomaru Y."/>
            <person name="Fukuda S."/>
            <person name="Kanamori-Katayama M."/>
            <person name="Suzuki M."/>
            <person name="Aoki J."/>
            <person name="Arakawa T."/>
            <person name="Iida J."/>
            <person name="Imamura K."/>
            <person name="Itoh M."/>
            <person name="Kato T."/>
            <person name="Kawaji H."/>
            <person name="Kawagashira N."/>
            <person name="Kawashima T."/>
            <person name="Kojima M."/>
            <person name="Kondo S."/>
            <person name="Konno H."/>
            <person name="Nakano K."/>
            <person name="Ninomiya N."/>
            <person name="Nishio T."/>
            <person name="Okada M."/>
            <person name="Plessy C."/>
            <person name="Shibata K."/>
            <person name="Shiraki T."/>
            <person name="Suzuki S."/>
            <person name="Tagami M."/>
            <person name="Waki K."/>
            <person name="Watahiki A."/>
            <person name="Okamura-Oho Y."/>
            <person name="Suzuki H."/>
            <person name="Kawai J."/>
            <person name="Hayashizaki Y."/>
        </authorList>
    </citation>
    <scope>NUCLEOTIDE SEQUENCE [LARGE SCALE MRNA]</scope>
    <source>
        <strain>C57BL/6J</strain>
        <tissue>Pituitary</tissue>
    </source>
</reference>
<reference key="4">
    <citation type="journal article" date="2004" name="Genome Res.">
        <title>The status, quality, and expansion of the NIH full-length cDNA project: the Mammalian Gene Collection (MGC).</title>
        <authorList>
            <consortium name="The MGC Project Team"/>
        </authorList>
    </citation>
    <scope>NUCLEOTIDE SEQUENCE [LARGE SCALE MRNA]</scope>
    <source>
        <tissue>Pituitary</tissue>
    </source>
</reference>
<reference key="5">
    <citation type="journal article" date="1989" name="J. Biol. Chem.">
        <title>Expression of mouse proopiomelanocortin in an insulinoma cell line. Requirements for beta-endorphin processing.</title>
        <authorList>
            <person name="Thorne B.A."/>
            <person name="Caton L.W."/>
            <person name="Thomas G."/>
        </authorList>
    </citation>
    <scope>NUCLEOTIDE SEQUENCE OF 1-36</scope>
</reference>
<reference key="6">
    <citation type="journal article" date="1990" name="Proc. Natl. Acad. Sci. U.S.A.">
        <title>Nucleotide and amino acid sequence of lymphocyte-derived corticotropin: endotoxin induction of a truncated peptide.</title>
        <authorList>
            <person name="Smith E.M."/>
            <person name="Galin F.S."/>
            <person name="Leboeuf R.D."/>
            <person name="Coppenhaver D.H."/>
            <person name="Harbour D.V."/>
            <person name="Blalock E.J."/>
        </authorList>
    </citation>
    <scope>NUCLEOTIDE SEQUENCE [MRNA] OF 124-162</scope>
    <source>
        <strain>C3H/HeJ</strain>
        <tissue>Lymphocyte</tissue>
    </source>
</reference>
<reference key="7">
    <citation type="journal article" date="1979" name="Proc. Natl. Acad. Sci. U.S.A.">
        <title>Corticotropin and beta-endorphin: construction and analysis of recombinant DNA complementary to mRNA for the common precursor.</title>
        <authorList>
            <person name="Roberts J.L."/>
            <person name="Seeburg P.H."/>
            <person name="Shine J."/>
            <person name="Herbert E."/>
            <person name="Baxter J.D."/>
            <person name="Goodman H.M."/>
        </authorList>
    </citation>
    <scope>NUCLEOTIDE SEQUENCE [GENOMIC DNA] OF 187-234</scope>
</reference>
<reference key="8">
    <citation type="journal article" date="2015" name="Nature">
        <title>Hypothalamic POMC neurons promote cannabinoid-induced feeding.</title>
        <authorList>
            <person name="Koch M."/>
            <person name="Varela L."/>
            <person name="Kim J.G."/>
            <person name="Kim J.D."/>
            <person name="Hernandez-Nuno F."/>
            <person name="Simonds S.E."/>
            <person name="Castorena C.M."/>
            <person name="Vianna C.R."/>
            <person name="Elmquist J.K."/>
            <person name="Morozov Y.M."/>
            <person name="Rakic P."/>
            <person name="Bechmann I."/>
            <person name="Cowley M.A."/>
            <person name="Szigeti-Buck K."/>
            <person name="Dietrich M.O."/>
            <person name="Gao X.B."/>
            <person name="Diano S."/>
            <person name="Horvath T.L."/>
        </authorList>
    </citation>
    <scope>SUBCELLULAR LOCATION</scope>
    <scope>INDUCTION BY CANNABINOID</scope>
</reference>
<comment type="function">
    <molecule>Corticotropin</molecule>
    <text>Stimulates the adrenal glands to release cortisol.</text>
</comment>
<comment type="function">
    <molecule>Melanocyte-stimulating hormone alpha</molecule>
    <text>Anorexigenic peptide. Increases the pigmentation of skin by increasing melanin production in melanocytes.</text>
</comment>
<comment type="function">
    <molecule>Melanocyte-stimulating hormone beta</molecule>
    <text>Increases the pigmentation of skin by increasing melanin production in melanocytes.</text>
</comment>
<comment type="function">
    <molecule>Beta-endorphin</molecule>
    <text>Endogenous orexigenic opiate.</text>
</comment>
<comment type="function">
    <molecule>Met-enkephalin</molecule>
    <text>Endogenous opiate.</text>
</comment>
<comment type="subcellular location">
    <subcellularLocation>
        <location evidence="6">Secreted</location>
    </subcellularLocation>
    <text evidence="6">Melanocyte-stimulating hormone alpha and beta-endorphin are stored in separate granules in hypothalamic POMC neurons, suggesting that secretion may be under the control of different regulatory mechanisms.</text>
</comment>
<comment type="tissue specificity">
    <text>ACTH and MSH are produced by the pituitary gland.</text>
</comment>
<comment type="induction">
    <molecule>Beta-endorphin</molecule>
    <text evidence="6">In hypothalamic paraventricular nucleus (PVN), up-regulated by cannabinoids, including the CNR1/CB1R agonist arachidonyl-29-chloroethylamide (ACEA) (at protein level).</text>
</comment>
<comment type="PTM">
    <text>Specific enzymatic cleavages at paired basic residues yield the different active peptides.</text>
</comment>
<comment type="similarity">
    <text evidence="7">Belongs to the POMC family.</text>
</comment>
<evidence type="ECO:0000250" key="1"/>
<evidence type="ECO:0000250" key="2">
    <source>
        <dbReference type="UniProtKB" id="P01189"/>
    </source>
</evidence>
<evidence type="ECO:0000250" key="3">
    <source>
        <dbReference type="UniProtKB" id="P01191"/>
    </source>
</evidence>
<evidence type="ECO:0000255" key="4"/>
<evidence type="ECO:0000256" key="5">
    <source>
        <dbReference type="SAM" id="MobiDB-lite"/>
    </source>
</evidence>
<evidence type="ECO:0000269" key="6">
    <source>
    </source>
</evidence>
<evidence type="ECO:0000305" key="7"/>
<proteinExistence type="evidence at protein level"/>
<dbReference type="EMBL" id="J00612">
    <property type="protein sequence ID" value="AAB59729.1"/>
    <property type="molecule type" value="Genomic_DNA"/>
</dbReference>
<dbReference type="EMBL" id="J00611">
    <property type="protein sequence ID" value="AAB59729.1"/>
    <property type="status" value="JOINED"/>
    <property type="molecule type" value="Genomic_DNA"/>
</dbReference>
<dbReference type="EMBL" id="V01528">
    <property type="protein sequence ID" value="CAA24769.1"/>
    <property type="molecule type" value="Genomic_DNA"/>
</dbReference>
<dbReference type="EMBL" id="V01529">
    <property type="protein sequence ID" value="CAA24770.1"/>
    <property type="molecule type" value="Genomic_DNA"/>
</dbReference>
<dbReference type="EMBL" id="AK017492">
    <property type="protein sequence ID" value="BAB30771.1"/>
    <property type="molecule type" value="mRNA"/>
</dbReference>
<dbReference type="EMBL" id="AK017581">
    <property type="protein sequence ID" value="BAB30818.1"/>
    <property type="molecule type" value="mRNA"/>
</dbReference>
<dbReference type="EMBL" id="AK030714">
    <property type="protein sequence ID" value="BAC27095.1"/>
    <property type="molecule type" value="mRNA"/>
</dbReference>
<dbReference type="EMBL" id="AK077426">
    <property type="protein sequence ID" value="BAC36795.1"/>
    <property type="molecule type" value="mRNA"/>
</dbReference>
<dbReference type="EMBL" id="AK133592">
    <property type="protein sequence ID" value="BAE21739.1"/>
    <property type="molecule type" value="mRNA"/>
</dbReference>
<dbReference type="EMBL" id="AK133646">
    <property type="protein sequence ID" value="BAE21764.1"/>
    <property type="molecule type" value="mRNA"/>
</dbReference>
<dbReference type="EMBL" id="AK133740">
    <property type="protein sequence ID" value="BAE21815.1"/>
    <property type="molecule type" value="mRNA"/>
</dbReference>
<dbReference type="EMBL" id="AK133776">
    <property type="protein sequence ID" value="BAE21833.1"/>
    <property type="molecule type" value="mRNA"/>
</dbReference>
<dbReference type="EMBL" id="AK133800">
    <property type="protein sequence ID" value="BAE21850.1"/>
    <property type="molecule type" value="mRNA"/>
</dbReference>
<dbReference type="EMBL" id="BC061215">
    <property type="protein sequence ID" value="AAH61215.1"/>
    <property type="molecule type" value="mRNA"/>
</dbReference>
<dbReference type="EMBL" id="M30489">
    <property type="protein sequence ID" value="AAA37169.1"/>
    <property type="molecule type" value="mRNA"/>
</dbReference>
<dbReference type="EMBL" id="V00831">
    <property type="status" value="NOT_ANNOTATED_CDS"/>
    <property type="molecule type" value="mRNA"/>
</dbReference>
<dbReference type="CCDS" id="CCDS25785.1"/>
<dbReference type="PIR" id="A91312">
    <property type="entry name" value="CTMSP"/>
</dbReference>
<dbReference type="RefSeq" id="NP_001265510.1">
    <property type="nucleotide sequence ID" value="NM_001278581.1"/>
</dbReference>
<dbReference type="RefSeq" id="NP_001265511.1">
    <property type="nucleotide sequence ID" value="NM_001278582.1"/>
</dbReference>
<dbReference type="RefSeq" id="NP_001265512.1">
    <property type="nucleotide sequence ID" value="NM_001278583.1"/>
</dbReference>
<dbReference type="RefSeq" id="NP_001265513.1">
    <property type="nucleotide sequence ID" value="NM_001278584.1"/>
</dbReference>
<dbReference type="RefSeq" id="NP_032921.1">
    <property type="nucleotide sequence ID" value="NM_008895.4"/>
</dbReference>
<dbReference type="BMRB" id="P01193"/>
<dbReference type="SMR" id="P01193"/>
<dbReference type="BioGRID" id="202295">
    <property type="interactions" value="1"/>
</dbReference>
<dbReference type="ELM" id="P01193"/>
<dbReference type="FunCoup" id="P01193">
    <property type="interactions" value="756"/>
</dbReference>
<dbReference type="STRING" id="10090.ENSMUSP00000151504"/>
<dbReference type="GlyConnect" id="112">
    <property type="glycosylation" value="5 N-Linked glycans (1 site)"/>
</dbReference>
<dbReference type="GlyCosmos" id="P01193">
    <property type="glycosylation" value="2 sites, 8 glycans"/>
</dbReference>
<dbReference type="GlyGen" id="P01193">
    <property type="glycosylation" value="3 sites, 10 N-linked glycans (3 sites)"/>
</dbReference>
<dbReference type="iPTMnet" id="P01193"/>
<dbReference type="PhosphoSitePlus" id="P01193"/>
<dbReference type="CPTAC" id="non-CPTAC-4026"/>
<dbReference type="PaxDb" id="10090-ENSMUSP00000020990"/>
<dbReference type="PeptideAtlas" id="P01193"/>
<dbReference type="ProteomicsDB" id="283426"/>
<dbReference type="Antibodypedia" id="3452">
    <property type="antibodies" value="2427 antibodies from 42 providers"/>
</dbReference>
<dbReference type="DNASU" id="18976"/>
<dbReference type="Ensembl" id="ENSMUST00000020990.7">
    <property type="protein sequence ID" value="ENSMUSP00000020990.6"/>
    <property type="gene ID" value="ENSMUSG00000020660.7"/>
</dbReference>
<dbReference type="Ensembl" id="ENSMUST00000218089.2">
    <property type="protein sequence ID" value="ENSMUSP00000151367.2"/>
    <property type="gene ID" value="ENSMUSG00000020660.7"/>
</dbReference>
<dbReference type="Ensembl" id="ENSMUST00000219543.2">
    <property type="protein sequence ID" value="ENSMUSP00000151504.2"/>
    <property type="gene ID" value="ENSMUSG00000020660.7"/>
</dbReference>
<dbReference type="GeneID" id="18976"/>
<dbReference type="KEGG" id="mmu:18976"/>
<dbReference type="UCSC" id="uc007mxe.2">
    <property type="organism name" value="mouse"/>
</dbReference>
<dbReference type="AGR" id="MGI:97742"/>
<dbReference type="CTD" id="5443"/>
<dbReference type="MGI" id="MGI:97742">
    <property type="gene designation" value="Pomc"/>
</dbReference>
<dbReference type="VEuPathDB" id="HostDB:ENSMUSG00000020660"/>
<dbReference type="eggNOG" id="ENOG502RZNY">
    <property type="taxonomic scope" value="Eukaryota"/>
</dbReference>
<dbReference type="GeneTree" id="ENSGT00390000016811"/>
<dbReference type="HOGENOM" id="CLU_094632_0_0_1"/>
<dbReference type="InParanoid" id="P01193"/>
<dbReference type="OMA" id="NIRKYVM"/>
<dbReference type="OrthoDB" id="8962839at2759"/>
<dbReference type="PhylomeDB" id="P01193"/>
<dbReference type="TreeFam" id="TF333215"/>
<dbReference type="Reactome" id="R-MMU-111885">
    <property type="pathway name" value="Opioid Signalling"/>
</dbReference>
<dbReference type="Reactome" id="R-MMU-193048">
    <property type="pathway name" value="Androgen biosynthesis"/>
</dbReference>
<dbReference type="Reactome" id="R-MMU-194002">
    <property type="pathway name" value="Glucocorticoid biosynthesis"/>
</dbReference>
<dbReference type="Reactome" id="R-MMU-202040">
    <property type="pathway name" value="G-protein activation"/>
</dbReference>
<dbReference type="Reactome" id="R-MMU-209952">
    <property type="pathway name" value="Peptide hormone biosynthesis"/>
</dbReference>
<dbReference type="Reactome" id="R-MMU-211976">
    <property type="pathway name" value="Endogenous sterols"/>
</dbReference>
<dbReference type="Reactome" id="R-MMU-375276">
    <property type="pathway name" value="Peptide ligand-binding receptors"/>
</dbReference>
<dbReference type="Reactome" id="R-MMU-418555">
    <property type="pathway name" value="G alpha (s) signalling events"/>
</dbReference>
<dbReference type="Reactome" id="R-MMU-418594">
    <property type="pathway name" value="G alpha (i) signalling events"/>
</dbReference>
<dbReference type="BioGRID-ORCS" id="18976">
    <property type="hits" value="3 hits in 82 CRISPR screens"/>
</dbReference>
<dbReference type="ChiTaRS" id="Pomc">
    <property type="organism name" value="mouse"/>
</dbReference>
<dbReference type="PRO" id="PR:P01193"/>
<dbReference type="Proteomes" id="UP000000589">
    <property type="component" value="Chromosome 12"/>
</dbReference>
<dbReference type="RNAct" id="P01193">
    <property type="molecule type" value="protein"/>
</dbReference>
<dbReference type="Bgee" id="ENSMUSG00000020660">
    <property type="expression patterns" value="Expressed in pituitary gland and 128 other cell types or tissues"/>
</dbReference>
<dbReference type="ExpressionAtlas" id="P01193">
    <property type="expression patterns" value="baseline and differential"/>
</dbReference>
<dbReference type="GO" id="GO:0005737">
    <property type="term" value="C:cytoplasm"/>
    <property type="evidence" value="ECO:0000314"/>
    <property type="project" value="MGI"/>
</dbReference>
<dbReference type="GO" id="GO:0005576">
    <property type="term" value="C:extracellular region"/>
    <property type="evidence" value="ECO:0000304"/>
    <property type="project" value="Reactome"/>
</dbReference>
<dbReference type="GO" id="GO:0005615">
    <property type="term" value="C:extracellular space"/>
    <property type="evidence" value="ECO:0000314"/>
    <property type="project" value="MGI"/>
</dbReference>
<dbReference type="GO" id="GO:0030141">
    <property type="term" value="C:secretory granule"/>
    <property type="evidence" value="ECO:0000314"/>
    <property type="project" value="MGI"/>
</dbReference>
<dbReference type="GO" id="GO:0001664">
    <property type="term" value="F:G protein-coupled receptor binding"/>
    <property type="evidence" value="ECO:0000250"/>
    <property type="project" value="UniProtKB"/>
</dbReference>
<dbReference type="GO" id="GO:0005179">
    <property type="term" value="F:hormone activity"/>
    <property type="evidence" value="ECO:0000314"/>
    <property type="project" value="MGI"/>
</dbReference>
<dbReference type="GO" id="GO:0070996">
    <property type="term" value="F:type 1 melanocortin receptor binding"/>
    <property type="evidence" value="ECO:0000250"/>
    <property type="project" value="UniProtKB"/>
</dbReference>
<dbReference type="GO" id="GO:0031781">
    <property type="term" value="F:type 3 melanocortin receptor binding"/>
    <property type="evidence" value="ECO:0007669"/>
    <property type="project" value="Ensembl"/>
</dbReference>
<dbReference type="GO" id="GO:0031782">
    <property type="term" value="F:type 4 melanocortin receptor binding"/>
    <property type="evidence" value="ECO:0007669"/>
    <property type="project" value="Ensembl"/>
</dbReference>
<dbReference type="GO" id="GO:0019722">
    <property type="term" value="P:calcium-mediated signaling"/>
    <property type="evidence" value="ECO:0000315"/>
    <property type="project" value="ARUK-UCL"/>
</dbReference>
<dbReference type="GO" id="GO:0007267">
    <property type="term" value="P:cell-cell signaling"/>
    <property type="evidence" value="ECO:0000250"/>
    <property type="project" value="UniProtKB"/>
</dbReference>
<dbReference type="GO" id="GO:0033059">
    <property type="term" value="P:cellular pigmentation"/>
    <property type="evidence" value="ECO:0000250"/>
    <property type="project" value="UniProtKB"/>
</dbReference>
<dbReference type="GO" id="GO:0006091">
    <property type="term" value="P:generation of precursor metabolites and energy"/>
    <property type="evidence" value="ECO:0000250"/>
    <property type="project" value="UniProtKB"/>
</dbReference>
<dbReference type="GO" id="GO:0042593">
    <property type="term" value="P:glucose homeostasis"/>
    <property type="evidence" value="ECO:0000315"/>
    <property type="project" value="MGI"/>
</dbReference>
<dbReference type="GO" id="GO:0032720">
    <property type="term" value="P:negative regulation of tumor necrosis factor production"/>
    <property type="evidence" value="ECO:0000250"/>
    <property type="project" value="UniProtKB"/>
</dbReference>
<dbReference type="GO" id="GO:0007218">
    <property type="term" value="P:neuropeptide signaling pathway"/>
    <property type="evidence" value="ECO:0007669"/>
    <property type="project" value="UniProtKB-KW"/>
</dbReference>
<dbReference type="GO" id="GO:0106071">
    <property type="term" value="P:positive regulation of adenylate cyclase-activating G protein-coupled receptor signaling pathway"/>
    <property type="evidence" value="ECO:0000314"/>
    <property type="project" value="ARUK-UCL"/>
</dbReference>
<dbReference type="GO" id="GO:0140668">
    <property type="term" value="P:positive regulation of oxytocin production"/>
    <property type="evidence" value="ECO:0000314"/>
    <property type="project" value="ARUK-UCL"/>
</dbReference>
<dbReference type="GO" id="GO:0045944">
    <property type="term" value="P:positive regulation of transcription by RNA polymerase II"/>
    <property type="evidence" value="ECO:0000250"/>
    <property type="project" value="UniProtKB"/>
</dbReference>
<dbReference type="GO" id="GO:0032098">
    <property type="term" value="P:regulation of appetite"/>
    <property type="evidence" value="ECO:0000250"/>
    <property type="project" value="UniProtKB"/>
</dbReference>
<dbReference type="GO" id="GO:0008217">
    <property type="term" value="P:regulation of blood pressure"/>
    <property type="evidence" value="ECO:0000316"/>
    <property type="project" value="MGI"/>
</dbReference>
<dbReference type="GO" id="GO:2000852">
    <property type="term" value="P:regulation of corticosterone secretion"/>
    <property type="evidence" value="ECO:0000315"/>
    <property type="project" value="MGI"/>
</dbReference>
<dbReference type="GO" id="GO:0070873">
    <property type="term" value="P:regulation of glycogen metabolic process"/>
    <property type="evidence" value="ECO:0000315"/>
    <property type="project" value="MGI"/>
</dbReference>
<dbReference type="GO" id="GO:1990680">
    <property type="term" value="P:response to melanocyte-stimulating hormone"/>
    <property type="evidence" value="ECO:0000314"/>
    <property type="project" value="ARUK-UCL"/>
</dbReference>
<dbReference type="GO" id="GO:0007165">
    <property type="term" value="P:signal transduction"/>
    <property type="evidence" value="ECO:0000250"/>
    <property type="project" value="UniProtKB"/>
</dbReference>
<dbReference type="InterPro" id="IPR013531">
    <property type="entry name" value="Mcrtin_ACTH_cent"/>
</dbReference>
<dbReference type="InterPro" id="IPR013593">
    <property type="entry name" value="Melanocortin_N"/>
</dbReference>
<dbReference type="InterPro" id="IPR013532">
    <property type="entry name" value="Opioid_neuropept"/>
</dbReference>
<dbReference type="InterPro" id="IPR001941">
    <property type="entry name" value="PMOC"/>
</dbReference>
<dbReference type="InterPro" id="IPR050878">
    <property type="entry name" value="POMC-derived_peptides"/>
</dbReference>
<dbReference type="PANTHER" id="PTHR11416">
    <property type="entry name" value="PRO-OPIOMELANOCORTIN"/>
    <property type="match status" value="1"/>
</dbReference>
<dbReference type="PANTHER" id="PTHR11416:SF7">
    <property type="entry name" value="PRO-OPIOMELANOCORTIN"/>
    <property type="match status" value="1"/>
</dbReference>
<dbReference type="Pfam" id="PF00976">
    <property type="entry name" value="ACTH_domain"/>
    <property type="match status" value="3"/>
</dbReference>
<dbReference type="Pfam" id="PF08384">
    <property type="entry name" value="NPP"/>
    <property type="match status" value="1"/>
</dbReference>
<dbReference type="Pfam" id="PF08035">
    <property type="entry name" value="Op_neuropeptide"/>
    <property type="match status" value="1"/>
</dbReference>
<dbReference type="PRINTS" id="PR00383">
    <property type="entry name" value="MELANOCORTIN"/>
</dbReference>
<dbReference type="SMART" id="SM01363">
    <property type="entry name" value="ACTH_domain"/>
    <property type="match status" value="2"/>
</dbReference>
<dbReference type="SMART" id="SM01364">
    <property type="entry name" value="NPP"/>
    <property type="match status" value="1"/>
</dbReference>
<dbReference type="SMART" id="SM01365">
    <property type="entry name" value="Op_neuropeptide"/>
    <property type="match status" value="1"/>
</dbReference>
<name>COLI_MOUSE</name>
<gene>
    <name type="primary">Pomc</name>
    <name type="synonym">Pomc1</name>
</gene>
<organism>
    <name type="scientific">Mus musculus</name>
    <name type="common">Mouse</name>
    <dbReference type="NCBI Taxonomy" id="10090"/>
    <lineage>
        <taxon>Eukaryota</taxon>
        <taxon>Metazoa</taxon>
        <taxon>Chordata</taxon>
        <taxon>Craniata</taxon>
        <taxon>Vertebrata</taxon>
        <taxon>Euteleostomi</taxon>
        <taxon>Mammalia</taxon>
        <taxon>Eutheria</taxon>
        <taxon>Euarchontoglires</taxon>
        <taxon>Glires</taxon>
        <taxon>Rodentia</taxon>
        <taxon>Myomorpha</taxon>
        <taxon>Muroidea</taxon>
        <taxon>Muridae</taxon>
        <taxon>Murinae</taxon>
        <taxon>Mus</taxon>
        <taxon>Mus</taxon>
    </lineage>
</organism>
<keyword id="KW-0007">Acetylation</keyword>
<keyword id="KW-0027">Amidation</keyword>
<keyword id="KW-0165">Cleavage on pair of basic residues</keyword>
<keyword id="KW-0257">Endorphin</keyword>
<keyword id="KW-0325">Glycoprotein</keyword>
<keyword id="KW-0372">Hormone</keyword>
<keyword id="KW-0597">Phosphoprotein</keyword>
<keyword id="KW-1185">Reference proteome</keyword>
<keyword id="KW-0964">Secreted</keyword>
<keyword id="KW-0732">Signal</keyword>
<accession>P01193</accession>
<accession>P01200</accession>
<accession>Q544U4</accession>
<protein>
    <recommendedName>
        <fullName>Pro-opiomelanocortin</fullName>
        <shortName>POMC</shortName>
    </recommendedName>
    <alternativeName>
        <fullName>Corticotropin-lipotropin</fullName>
    </alternativeName>
    <component>
        <recommendedName>
            <fullName>NPP</fullName>
        </recommendedName>
    </component>
    <component>
        <recommendedName>
            <fullName>Melanotropin gamma</fullName>
        </recommendedName>
        <alternativeName>
            <fullName>Gamma-MSH</fullName>
        </alternativeName>
    </component>
    <component>
        <recommendedName>
            <fullName>Corticotropin</fullName>
        </recommendedName>
        <alternativeName>
            <fullName>Adrenocorticotropic hormone</fullName>
            <shortName>ACTH</shortName>
        </alternativeName>
    </component>
    <component>
        <recommendedName>
            <fullName>Melanocyte-stimulating hormone alpha</fullName>
            <shortName>Alpha-MSH</shortName>
        </recommendedName>
        <alternativeName>
            <fullName>Melanotropin alpha</fullName>
        </alternativeName>
    </component>
    <component>
        <recommendedName>
            <fullName>Corticotropin-like intermediary peptide</fullName>
            <shortName>CLIP</shortName>
        </recommendedName>
    </component>
    <component>
        <recommendedName>
            <fullName>Lipotropin beta</fullName>
        </recommendedName>
        <alternativeName>
            <fullName>Beta-LPH</fullName>
        </alternativeName>
    </component>
    <component>
        <recommendedName>
            <fullName>Lipotropin gamma</fullName>
        </recommendedName>
        <alternativeName>
            <fullName>Gamma-LPH</fullName>
        </alternativeName>
    </component>
    <component>
        <recommendedName>
            <fullName>Melanocyte-stimulating hormone beta</fullName>
            <shortName>Beta-MSH</shortName>
        </recommendedName>
        <alternativeName>
            <fullName>Melanotropin beta</fullName>
        </alternativeName>
    </component>
    <component>
        <recommendedName>
            <fullName>Beta-endorphin</fullName>
        </recommendedName>
    </component>
    <component>
        <recommendedName>
            <fullName>Met-enkephalin</fullName>
        </recommendedName>
    </component>
</protein>
<feature type="signal peptide" evidence="1">
    <location>
        <begin position="1"/>
        <end position="26"/>
    </location>
</feature>
<feature type="peptide" id="PRO_0000024996" description="NPP">
    <location>
        <begin position="27"/>
        <end position="100"/>
    </location>
</feature>
<feature type="peptide" id="PRO_0000024997" description="Melanotropin gamma">
    <location>
        <begin position="77"/>
        <end position="87"/>
    </location>
</feature>
<feature type="propeptide" id="PRO_0000024998">
    <location>
        <begin position="103"/>
        <end position="121"/>
    </location>
</feature>
<feature type="peptide" id="PRO_0000024999" description="Corticotropin">
    <location>
        <begin position="124"/>
        <end position="162"/>
    </location>
</feature>
<feature type="peptide" id="PRO_0000025000" description="Melanocyte-stimulating hormone alpha">
    <location>
        <begin position="124"/>
        <end position="136"/>
    </location>
</feature>
<feature type="peptide" id="PRO_0000025001" description="Corticotropin-like intermediary peptide">
    <location>
        <begin position="142"/>
        <end position="162"/>
    </location>
</feature>
<feature type="peptide" id="PRO_0000025002" description="Lipotropin beta">
    <location>
        <begin position="165"/>
        <end position="235"/>
    </location>
</feature>
<feature type="peptide" id="PRO_0000025003" description="Lipotropin gamma">
    <location>
        <begin position="165"/>
        <end position="202"/>
    </location>
</feature>
<feature type="peptide" id="PRO_0000025004" description="Melanocyte-stimulating hormone beta">
    <location>
        <begin position="185"/>
        <end position="202"/>
    </location>
</feature>
<feature type="peptide" id="PRO_0000025005" description="Beta-endorphin">
    <location>
        <begin position="205"/>
        <end position="235"/>
    </location>
</feature>
<feature type="peptide" id="PRO_0000025006" description="Met-enkephalin">
    <location>
        <begin position="205"/>
        <end position="209"/>
    </location>
</feature>
<feature type="region of interest" description="Disordered" evidence="5">
    <location>
        <begin position="88"/>
        <end position="126"/>
    </location>
</feature>
<feature type="region of interest" description="Disordered" evidence="5">
    <location>
        <begin position="179"/>
        <end position="210"/>
    </location>
</feature>
<feature type="compositionally biased region" description="Low complexity" evidence="5">
    <location>
        <begin position="90"/>
        <end position="100"/>
    </location>
</feature>
<feature type="compositionally biased region" description="Basic and acidic residues" evidence="5">
    <location>
        <begin position="117"/>
        <end position="126"/>
    </location>
</feature>
<feature type="compositionally biased region" description="Basic and acidic residues" evidence="5">
    <location>
        <begin position="185"/>
        <end position="205"/>
    </location>
</feature>
<feature type="modified residue" description="Phenylalanine amide" evidence="1">
    <location>
        <position position="87"/>
    </location>
</feature>
<feature type="modified residue" description="N-acetylserine; in Corticotropin" evidence="3">
    <location>
        <position position="124"/>
    </location>
</feature>
<feature type="modified residue" description="Valine amide" evidence="1">
    <location>
        <position position="136"/>
    </location>
</feature>
<feature type="modified residue" description="Phosphoserine" evidence="2">
    <location>
        <position position="154"/>
    </location>
</feature>
<feature type="glycosylation site" description="N-linked (GlcNAc...) asparagine" evidence="4">
    <location>
        <position position="91"/>
    </location>
</feature>
<feature type="glycosylation site" description="N-linked (GlcNAc...) asparagine" evidence="4">
    <location>
        <position position="152"/>
    </location>
</feature>
<feature type="sequence conflict" description="In Ref. 2; CAA24770." evidence="7" ref="2">
    <original>Q</original>
    <variation>H</variation>
    <location>
        <position position="176"/>
    </location>
</feature>